<accession>P03852</accession>
<keyword id="KW-0614">Plasmid</keyword>
<proteinExistence type="predicted"/>
<organism>
    <name type="scientific">Escherichia coli</name>
    <dbReference type="NCBI Taxonomy" id="562"/>
    <lineage>
        <taxon>Bacteria</taxon>
        <taxon>Pseudomonadati</taxon>
        <taxon>Pseudomonadota</taxon>
        <taxon>Gammaproteobacteria</taxon>
        <taxon>Enterobacterales</taxon>
        <taxon>Enterobacteriaceae</taxon>
        <taxon>Escherichia</taxon>
    </lineage>
</organism>
<sequence length="132" mass="15322">MPPCKGEFLFMGVMIPMKRERMLTIRVTDDEHARLLERCEGKQLAVWMRRDQRKITQGQCQRFVNTDVGVPQGSQQHPAMQIRNIMVQGADFRVSRLYETRKPKTIHVVAQVADVLQQQSLHVRSRIGDSFC</sequence>
<dbReference type="EMBL" id="J01749">
    <property type="status" value="NOT_ANNOTATED_CDS"/>
    <property type="molecule type" value="Genomic_DNA"/>
</dbReference>
<dbReference type="PIR" id="A04481">
    <property type="entry name" value="QQEC8"/>
</dbReference>
<dbReference type="SMR" id="P03852"/>
<name>YPB1_ECOLX</name>
<reference key="1">
    <citation type="journal article" date="1979" name="Cold Spring Harb. Symp. Quant. Biol.">
        <title>Complete nucleotide sequence of the Escherichia coli plasmid pBR322.</title>
        <authorList>
            <person name="Sutcliffe J.G."/>
        </authorList>
    </citation>
    <scope>NUCLEOTIDE SEQUENCE [GENOMIC DNA]</scope>
</reference>
<geneLocation type="plasmid">
    <name>pMB1</name>
</geneLocation>
<protein>
    <recommendedName>
        <fullName>Uncharacterized 15.3 kDa protein</fullName>
    </recommendedName>
</protein>
<feature type="chain" id="PRO_0000068515" description="Uncharacterized 15.3 kDa protein">
    <location>
        <begin position="1"/>
        <end position="132"/>
    </location>
</feature>